<reference key="1">
    <citation type="journal article" date="2009" name="PLoS Pathog.">
        <title>Genomic evidence for the evolution of Streptococcus equi: host restriction, increased virulence, and genetic exchange with human pathogens.</title>
        <authorList>
            <person name="Holden M.T.G."/>
            <person name="Heather Z."/>
            <person name="Paillot R."/>
            <person name="Steward K.F."/>
            <person name="Webb K."/>
            <person name="Ainslie F."/>
            <person name="Jourdan T."/>
            <person name="Bason N.C."/>
            <person name="Holroyd N.E."/>
            <person name="Mungall K."/>
            <person name="Quail M.A."/>
            <person name="Sanders M."/>
            <person name="Simmonds M."/>
            <person name="Willey D."/>
            <person name="Brooks K."/>
            <person name="Aanensen D.M."/>
            <person name="Spratt B.G."/>
            <person name="Jolley K.A."/>
            <person name="Maiden M.C.J."/>
            <person name="Kehoe M."/>
            <person name="Chanter N."/>
            <person name="Bentley S.D."/>
            <person name="Robinson C."/>
            <person name="Maskell D.J."/>
            <person name="Parkhill J."/>
            <person name="Waller A.S."/>
        </authorList>
    </citation>
    <scope>NUCLEOTIDE SEQUENCE [LARGE SCALE GENOMIC DNA]</scope>
    <source>
        <strain>H70</strain>
    </source>
</reference>
<gene>
    <name evidence="1" type="primary">glyQ</name>
    <name type="ordered locus">SZO_15010</name>
</gene>
<name>SYGA_STRS7</name>
<proteinExistence type="inferred from homology"/>
<evidence type="ECO:0000255" key="1">
    <source>
        <dbReference type="HAMAP-Rule" id="MF_00254"/>
    </source>
</evidence>
<organism>
    <name type="scientific">Streptococcus equi subsp. zooepidemicus (strain H70)</name>
    <dbReference type="NCBI Taxonomy" id="553483"/>
    <lineage>
        <taxon>Bacteria</taxon>
        <taxon>Bacillati</taxon>
        <taxon>Bacillota</taxon>
        <taxon>Bacilli</taxon>
        <taxon>Lactobacillales</taxon>
        <taxon>Streptococcaceae</taxon>
        <taxon>Streptococcus</taxon>
    </lineage>
</organism>
<sequence>MSNKLTFQEIILTLQQYWNDQGCMLMQAYDNEKGAGTMSPYTFLRAIGPEPWNAAYVEPSRRPADGRYGENPNRLYQHHQFQVVMKPSPSNIQELYLQSLERLGIDPLEHDIRFVEDNWENPSTGSAGLGWEVWLDGMEITQFTYFQQVGGLATSPVTAEVTYGLERLASYIQEVDSVYDIEWAPGVKYGEIFLQPEYEHSKYSFEVSNQDMLLENFETFEKEAERALAQGLVHPAYDYVLKCSHTFNLLDARGAVSVTERAGYIARIRHLARSVAKTFVAERKKLGFPLLDDASRVALLAED</sequence>
<feature type="chain" id="PRO_1000204595" description="Glycine--tRNA ligase alpha subunit">
    <location>
        <begin position="1"/>
        <end position="303"/>
    </location>
</feature>
<dbReference type="EC" id="6.1.1.14" evidence="1"/>
<dbReference type="EMBL" id="FM204884">
    <property type="protein sequence ID" value="CAX00164.1"/>
    <property type="molecule type" value="Genomic_DNA"/>
</dbReference>
<dbReference type="SMR" id="C0MDQ4"/>
<dbReference type="KEGG" id="seq:SZO_15010"/>
<dbReference type="eggNOG" id="COG0752">
    <property type="taxonomic scope" value="Bacteria"/>
</dbReference>
<dbReference type="HOGENOM" id="CLU_057066_1_0_9"/>
<dbReference type="Proteomes" id="UP000001368">
    <property type="component" value="Chromosome"/>
</dbReference>
<dbReference type="GO" id="GO:0005829">
    <property type="term" value="C:cytosol"/>
    <property type="evidence" value="ECO:0007669"/>
    <property type="project" value="TreeGrafter"/>
</dbReference>
<dbReference type="GO" id="GO:0005524">
    <property type="term" value="F:ATP binding"/>
    <property type="evidence" value="ECO:0007669"/>
    <property type="project" value="UniProtKB-UniRule"/>
</dbReference>
<dbReference type="GO" id="GO:0140096">
    <property type="term" value="F:catalytic activity, acting on a protein"/>
    <property type="evidence" value="ECO:0007669"/>
    <property type="project" value="UniProtKB-ARBA"/>
</dbReference>
<dbReference type="GO" id="GO:0004820">
    <property type="term" value="F:glycine-tRNA ligase activity"/>
    <property type="evidence" value="ECO:0007669"/>
    <property type="project" value="UniProtKB-UniRule"/>
</dbReference>
<dbReference type="GO" id="GO:0016740">
    <property type="term" value="F:transferase activity"/>
    <property type="evidence" value="ECO:0007669"/>
    <property type="project" value="UniProtKB-ARBA"/>
</dbReference>
<dbReference type="GO" id="GO:0006426">
    <property type="term" value="P:glycyl-tRNA aminoacylation"/>
    <property type="evidence" value="ECO:0007669"/>
    <property type="project" value="UniProtKB-UniRule"/>
</dbReference>
<dbReference type="CDD" id="cd00733">
    <property type="entry name" value="GlyRS_alpha_core"/>
    <property type="match status" value="1"/>
</dbReference>
<dbReference type="FunFam" id="3.30.930.10:FF:000006">
    <property type="entry name" value="Glycine--tRNA ligase alpha subunit"/>
    <property type="match status" value="1"/>
</dbReference>
<dbReference type="Gene3D" id="3.30.930.10">
    <property type="entry name" value="Bira Bifunctional Protein, Domain 2"/>
    <property type="match status" value="1"/>
</dbReference>
<dbReference type="Gene3D" id="1.20.58.180">
    <property type="entry name" value="Class II aaRS and biotin synthetases, domain 2"/>
    <property type="match status" value="1"/>
</dbReference>
<dbReference type="HAMAP" id="MF_00254">
    <property type="entry name" value="Gly_tRNA_synth_alpha"/>
    <property type="match status" value="1"/>
</dbReference>
<dbReference type="InterPro" id="IPR045864">
    <property type="entry name" value="aa-tRNA-synth_II/BPL/LPL"/>
</dbReference>
<dbReference type="InterPro" id="IPR006194">
    <property type="entry name" value="Gly-tRNA-synth_heterodimer"/>
</dbReference>
<dbReference type="InterPro" id="IPR002310">
    <property type="entry name" value="Gly-tRNA_ligase_asu"/>
</dbReference>
<dbReference type="NCBIfam" id="TIGR00388">
    <property type="entry name" value="glyQ"/>
    <property type="match status" value="1"/>
</dbReference>
<dbReference type="NCBIfam" id="NF006827">
    <property type="entry name" value="PRK09348.1"/>
    <property type="match status" value="1"/>
</dbReference>
<dbReference type="PANTHER" id="PTHR30075:SF2">
    <property type="entry name" value="GLYCINE--TRNA LIGASE, CHLOROPLASTIC_MITOCHONDRIAL 2"/>
    <property type="match status" value="1"/>
</dbReference>
<dbReference type="PANTHER" id="PTHR30075">
    <property type="entry name" value="GLYCYL-TRNA SYNTHETASE"/>
    <property type="match status" value="1"/>
</dbReference>
<dbReference type="Pfam" id="PF02091">
    <property type="entry name" value="tRNA-synt_2e"/>
    <property type="match status" value="1"/>
</dbReference>
<dbReference type="PRINTS" id="PR01044">
    <property type="entry name" value="TRNASYNTHGA"/>
</dbReference>
<dbReference type="SUPFAM" id="SSF55681">
    <property type="entry name" value="Class II aaRS and biotin synthetases"/>
    <property type="match status" value="1"/>
</dbReference>
<dbReference type="PROSITE" id="PS50861">
    <property type="entry name" value="AA_TRNA_LIGASE_II_GLYAB"/>
    <property type="match status" value="1"/>
</dbReference>
<accession>C0MDQ4</accession>
<protein>
    <recommendedName>
        <fullName evidence="1">Glycine--tRNA ligase alpha subunit</fullName>
        <ecNumber evidence="1">6.1.1.14</ecNumber>
    </recommendedName>
    <alternativeName>
        <fullName evidence="1">Glycyl-tRNA synthetase alpha subunit</fullName>
        <shortName evidence="1">GlyRS</shortName>
    </alternativeName>
</protein>
<comment type="catalytic activity">
    <reaction evidence="1">
        <text>tRNA(Gly) + glycine + ATP = glycyl-tRNA(Gly) + AMP + diphosphate</text>
        <dbReference type="Rhea" id="RHEA:16013"/>
        <dbReference type="Rhea" id="RHEA-COMP:9664"/>
        <dbReference type="Rhea" id="RHEA-COMP:9683"/>
        <dbReference type="ChEBI" id="CHEBI:30616"/>
        <dbReference type="ChEBI" id="CHEBI:33019"/>
        <dbReference type="ChEBI" id="CHEBI:57305"/>
        <dbReference type="ChEBI" id="CHEBI:78442"/>
        <dbReference type="ChEBI" id="CHEBI:78522"/>
        <dbReference type="ChEBI" id="CHEBI:456215"/>
        <dbReference type="EC" id="6.1.1.14"/>
    </reaction>
</comment>
<comment type="subunit">
    <text evidence="1">Tetramer of two alpha and two beta subunits.</text>
</comment>
<comment type="subcellular location">
    <subcellularLocation>
        <location evidence="1">Cytoplasm</location>
    </subcellularLocation>
</comment>
<comment type="similarity">
    <text evidence="1">Belongs to the class-II aminoacyl-tRNA synthetase family.</text>
</comment>
<keyword id="KW-0030">Aminoacyl-tRNA synthetase</keyword>
<keyword id="KW-0067">ATP-binding</keyword>
<keyword id="KW-0963">Cytoplasm</keyword>
<keyword id="KW-0436">Ligase</keyword>
<keyword id="KW-0547">Nucleotide-binding</keyword>
<keyword id="KW-0648">Protein biosynthesis</keyword>